<keyword id="KW-0963">Cytoplasm</keyword>
<keyword id="KW-0312">Gluconeogenesis</keyword>
<keyword id="KW-0324">Glycolysis</keyword>
<keyword id="KW-0413">Isomerase</keyword>
<evidence type="ECO:0000255" key="1">
    <source>
        <dbReference type="HAMAP-Rule" id="MF_00147"/>
    </source>
</evidence>
<proteinExistence type="inferred from homology"/>
<feature type="chain" id="PRO_0000090188" description="Triosephosphate isomerase">
    <location>
        <begin position="1"/>
        <end position="254"/>
    </location>
</feature>
<feature type="active site" description="Electrophile" evidence="1">
    <location>
        <position position="99"/>
    </location>
</feature>
<feature type="active site" description="Proton acceptor" evidence="1">
    <location>
        <position position="169"/>
    </location>
</feature>
<feature type="binding site" evidence="1">
    <location>
        <begin position="12"/>
        <end position="14"/>
    </location>
    <ligand>
        <name>substrate</name>
    </ligand>
</feature>
<feature type="binding site" evidence="1">
    <location>
        <position position="175"/>
    </location>
    <ligand>
        <name>substrate</name>
    </ligand>
</feature>
<feature type="binding site" evidence="1">
    <location>
        <position position="214"/>
    </location>
    <ligand>
        <name>substrate</name>
    </ligand>
</feature>
<feature type="binding site" evidence="1">
    <location>
        <begin position="235"/>
        <end position="236"/>
    </location>
    <ligand>
        <name>substrate</name>
    </ligand>
</feature>
<protein>
    <recommendedName>
        <fullName evidence="1">Triosephosphate isomerase</fullName>
        <shortName evidence="1">TIM</shortName>
        <shortName evidence="1">TPI</shortName>
        <ecNumber evidence="1">5.3.1.1</ecNumber>
    </recommendedName>
    <alternativeName>
        <fullName evidence="1">Triose-phosphate isomerase</fullName>
    </alternativeName>
</protein>
<organism>
    <name type="scientific">Brucella abortus biovar 1 (strain 9-941)</name>
    <dbReference type="NCBI Taxonomy" id="262698"/>
    <lineage>
        <taxon>Bacteria</taxon>
        <taxon>Pseudomonadati</taxon>
        <taxon>Pseudomonadota</taxon>
        <taxon>Alphaproteobacteria</taxon>
        <taxon>Hyphomicrobiales</taxon>
        <taxon>Brucellaceae</taxon>
        <taxon>Brucella/Ochrobactrum group</taxon>
        <taxon>Brucella</taxon>
    </lineage>
</organism>
<reference key="1">
    <citation type="journal article" date="2005" name="J. Bacteriol.">
        <title>Completion of the genome sequence of Brucella abortus and comparison to the highly similar genomes of Brucella melitensis and Brucella suis.</title>
        <authorList>
            <person name="Halling S.M."/>
            <person name="Peterson-Burch B.D."/>
            <person name="Bricker B.J."/>
            <person name="Zuerner R.L."/>
            <person name="Qing Z."/>
            <person name="Li L.-L."/>
            <person name="Kapur V."/>
            <person name="Alt D.P."/>
            <person name="Olsen S.C."/>
        </authorList>
    </citation>
    <scope>NUCLEOTIDE SEQUENCE [LARGE SCALE GENOMIC DNA]</scope>
    <source>
        <strain>9-941</strain>
    </source>
</reference>
<sequence length="254" mass="26485">MTPGIRPLVAGNWKMNGKGESLTELRAIAAGLSSDLGRKLDAVICVPATLLSRAAETLEGETVGLGGQDAHFKTSGAHTGDISPEMLKEAGATHVILGHSERRTDHHESNKLICAKTEAAWAAGLVAIVCVGETASERKAERALDVIGDQLSGSLPDGVTAENTIIAYEPVWAIGTGLTPTVQDVRAAHAFMREQLIERFGAKGAHLRLLYGGSVKPSNAAELLGVADVDGALVGGASLKAADFLAICETYRNL</sequence>
<gene>
    <name evidence="1" type="primary">tpiA</name>
    <name type="synonym">tpiA-1</name>
    <name type="ordered locus">BruAb1_1144</name>
</gene>
<name>TPIS_BRUAB</name>
<comment type="function">
    <text evidence="1">Involved in the gluconeogenesis. Catalyzes stereospecifically the conversion of dihydroxyacetone phosphate (DHAP) to D-glyceraldehyde-3-phosphate (G3P).</text>
</comment>
<comment type="catalytic activity">
    <reaction evidence="1">
        <text>D-glyceraldehyde 3-phosphate = dihydroxyacetone phosphate</text>
        <dbReference type="Rhea" id="RHEA:18585"/>
        <dbReference type="ChEBI" id="CHEBI:57642"/>
        <dbReference type="ChEBI" id="CHEBI:59776"/>
        <dbReference type="EC" id="5.3.1.1"/>
    </reaction>
</comment>
<comment type="pathway">
    <text evidence="1">Carbohydrate biosynthesis; gluconeogenesis.</text>
</comment>
<comment type="pathway">
    <text evidence="1">Carbohydrate degradation; glycolysis; D-glyceraldehyde 3-phosphate from glycerone phosphate: step 1/1.</text>
</comment>
<comment type="subunit">
    <text evidence="1">Homodimer.</text>
</comment>
<comment type="subcellular location">
    <subcellularLocation>
        <location evidence="1">Cytoplasm</location>
    </subcellularLocation>
</comment>
<comment type="similarity">
    <text evidence="1">Belongs to the triosephosphate isomerase family.</text>
</comment>
<accession>Q57D01</accession>
<dbReference type="EC" id="5.3.1.1" evidence="1"/>
<dbReference type="EMBL" id="AE017223">
    <property type="protein sequence ID" value="AAX74483.1"/>
    <property type="molecule type" value="Genomic_DNA"/>
</dbReference>
<dbReference type="RefSeq" id="WP_002964266.1">
    <property type="nucleotide sequence ID" value="NC_006932.1"/>
</dbReference>
<dbReference type="SMR" id="Q57D01"/>
<dbReference type="EnsemblBacteria" id="AAX74483">
    <property type="protein sequence ID" value="AAX74483"/>
    <property type="gene ID" value="BruAb1_1144"/>
</dbReference>
<dbReference type="GeneID" id="97533610"/>
<dbReference type="KEGG" id="bmb:BruAb1_1144"/>
<dbReference type="HOGENOM" id="CLU_024251_2_1_5"/>
<dbReference type="UniPathway" id="UPA00109">
    <property type="reaction ID" value="UER00189"/>
</dbReference>
<dbReference type="UniPathway" id="UPA00138"/>
<dbReference type="Proteomes" id="UP000000540">
    <property type="component" value="Chromosome I"/>
</dbReference>
<dbReference type="GO" id="GO:0005829">
    <property type="term" value="C:cytosol"/>
    <property type="evidence" value="ECO:0007669"/>
    <property type="project" value="TreeGrafter"/>
</dbReference>
<dbReference type="GO" id="GO:0004807">
    <property type="term" value="F:triose-phosphate isomerase activity"/>
    <property type="evidence" value="ECO:0007669"/>
    <property type="project" value="UniProtKB-UniRule"/>
</dbReference>
<dbReference type="GO" id="GO:0006094">
    <property type="term" value="P:gluconeogenesis"/>
    <property type="evidence" value="ECO:0007669"/>
    <property type="project" value="UniProtKB-UniRule"/>
</dbReference>
<dbReference type="GO" id="GO:0046166">
    <property type="term" value="P:glyceraldehyde-3-phosphate biosynthetic process"/>
    <property type="evidence" value="ECO:0007669"/>
    <property type="project" value="TreeGrafter"/>
</dbReference>
<dbReference type="GO" id="GO:0019563">
    <property type="term" value="P:glycerol catabolic process"/>
    <property type="evidence" value="ECO:0007669"/>
    <property type="project" value="TreeGrafter"/>
</dbReference>
<dbReference type="GO" id="GO:0006096">
    <property type="term" value="P:glycolytic process"/>
    <property type="evidence" value="ECO:0007669"/>
    <property type="project" value="UniProtKB-UniRule"/>
</dbReference>
<dbReference type="CDD" id="cd00311">
    <property type="entry name" value="TIM"/>
    <property type="match status" value="1"/>
</dbReference>
<dbReference type="FunFam" id="3.20.20.70:FF:000016">
    <property type="entry name" value="Triosephosphate isomerase"/>
    <property type="match status" value="1"/>
</dbReference>
<dbReference type="Gene3D" id="3.20.20.70">
    <property type="entry name" value="Aldolase class I"/>
    <property type="match status" value="1"/>
</dbReference>
<dbReference type="HAMAP" id="MF_00147_B">
    <property type="entry name" value="TIM_B"/>
    <property type="match status" value="1"/>
</dbReference>
<dbReference type="InterPro" id="IPR013785">
    <property type="entry name" value="Aldolase_TIM"/>
</dbReference>
<dbReference type="InterPro" id="IPR035990">
    <property type="entry name" value="TIM_sf"/>
</dbReference>
<dbReference type="InterPro" id="IPR022896">
    <property type="entry name" value="TrioseP_Isoase_bac/euk"/>
</dbReference>
<dbReference type="InterPro" id="IPR000652">
    <property type="entry name" value="Triosephosphate_isomerase"/>
</dbReference>
<dbReference type="InterPro" id="IPR020861">
    <property type="entry name" value="Triosephosphate_isomerase_AS"/>
</dbReference>
<dbReference type="NCBIfam" id="TIGR00419">
    <property type="entry name" value="tim"/>
    <property type="match status" value="1"/>
</dbReference>
<dbReference type="PANTHER" id="PTHR21139">
    <property type="entry name" value="TRIOSEPHOSPHATE ISOMERASE"/>
    <property type="match status" value="1"/>
</dbReference>
<dbReference type="PANTHER" id="PTHR21139:SF42">
    <property type="entry name" value="TRIOSEPHOSPHATE ISOMERASE"/>
    <property type="match status" value="1"/>
</dbReference>
<dbReference type="Pfam" id="PF00121">
    <property type="entry name" value="TIM"/>
    <property type="match status" value="1"/>
</dbReference>
<dbReference type="SUPFAM" id="SSF51351">
    <property type="entry name" value="Triosephosphate isomerase (TIM)"/>
    <property type="match status" value="1"/>
</dbReference>
<dbReference type="PROSITE" id="PS00171">
    <property type="entry name" value="TIM_1"/>
    <property type="match status" value="1"/>
</dbReference>
<dbReference type="PROSITE" id="PS51440">
    <property type="entry name" value="TIM_2"/>
    <property type="match status" value="1"/>
</dbReference>